<protein>
    <recommendedName>
        <fullName evidence="1">Elongation factor P</fullName>
        <shortName evidence="1">EF-P</shortName>
    </recommendedName>
</protein>
<name>EFP_DESAL</name>
<sequence length="187" mass="21209">MINAGELRKNTKLMIEGEPYVMLEVQFVKPGKGVAFYKCKMRNLMTGSLLERTYRSGDTFEPAALEEKKMQYLYAQGDEYYFMDVKTYDQVMLTEEAVGDAKEYLIDNLEMDILFFENKAIGITLPNFVELEVTQADPWVKGDSVAGDSKPVTLQTGMVLQVPPFVEEGTIIQVDTRTGAYVTRVKK</sequence>
<gene>
    <name evidence="1" type="primary">efp</name>
    <name type="ordered locus">Dalk_3772</name>
</gene>
<dbReference type="EMBL" id="CP001322">
    <property type="protein sequence ID" value="ACL05459.1"/>
    <property type="molecule type" value="Genomic_DNA"/>
</dbReference>
<dbReference type="RefSeq" id="WP_015948510.1">
    <property type="nucleotide sequence ID" value="NC_011768.1"/>
</dbReference>
<dbReference type="SMR" id="B8FLV5"/>
<dbReference type="KEGG" id="dal:Dalk_3772"/>
<dbReference type="eggNOG" id="COG0231">
    <property type="taxonomic scope" value="Bacteria"/>
</dbReference>
<dbReference type="HOGENOM" id="CLU_074944_0_1_7"/>
<dbReference type="UniPathway" id="UPA00345"/>
<dbReference type="Proteomes" id="UP000000739">
    <property type="component" value="Chromosome"/>
</dbReference>
<dbReference type="GO" id="GO:0005737">
    <property type="term" value="C:cytoplasm"/>
    <property type="evidence" value="ECO:0007669"/>
    <property type="project" value="UniProtKB-SubCell"/>
</dbReference>
<dbReference type="GO" id="GO:0003746">
    <property type="term" value="F:translation elongation factor activity"/>
    <property type="evidence" value="ECO:0007669"/>
    <property type="project" value="UniProtKB-UniRule"/>
</dbReference>
<dbReference type="GO" id="GO:0043043">
    <property type="term" value="P:peptide biosynthetic process"/>
    <property type="evidence" value="ECO:0007669"/>
    <property type="project" value="InterPro"/>
</dbReference>
<dbReference type="CDD" id="cd04470">
    <property type="entry name" value="S1_EF-P_repeat_1"/>
    <property type="match status" value="1"/>
</dbReference>
<dbReference type="CDD" id="cd05794">
    <property type="entry name" value="S1_EF-P_repeat_2"/>
    <property type="match status" value="1"/>
</dbReference>
<dbReference type="FunFam" id="2.30.30.30:FF:000003">
    <property type="entry name" value="Elongation factor P"/>
    <property type="match status" value="1"/>
</dbReference>
<dbReference type="FunFam" id="2.40.50.140:FF:000004">
    <property type="entry name" value="Elongation factor P"/>
    <property type="match status" value="1"/>
</dbReference>
<dbReference type="FunFam" id="2.40.50.140:FF:000009">
    <property type="entry name" value="Elongation factor P"/>
    <property type="match status" value="1"/>
</dbReference>
<dbReference type="Gene3D" id="2.30.30.30">
    <property type="match status" value="1"/>
</dbReference>
<dbReference type="Gene3D" id="2.40.50.140">
    <property type="entry name" value="Nucleic acid-binding proteins"/>
    <property type="match status" value="2"/>
</dbReference>
<dbReference type="HAMAP" id="MF_00141">
    <property type="entry name" value="EF_P"/>
    <property type="match status" value="1"/>
</dbReference>
<dbReference type="InterPro" id="IPR015365">
    <property type="entry name" value="Elong-fact-P_C"/>
</dbReference>
<dbReference type="InterPro" id="IPR012340">
    <property type="entry name" value="NA-bd_OB-fold"/>
</dbReference>
<dbReference type="InterPro" id="IPR014722">
    <property type="entry name" value="Rib_uL2_dom2"/>
</dbReference>
<dbReference type="InterPro" id="IPR020599">
    <property type="entry name" value="Transl_elong_fac_P/YeiP"/>
</dbReference>
<dbReference type="InterPro" id="IPR013185">
    <property type="entry name" value="Transl_elong_KOW-like"/>
</dbReference>
<dbReference type="InterPro" id="IPR001059">
    <property type="entry name" value="Transl_elong_P/YeiP_cen"/>
</dbReference>
<dbReference type="InterPro" id="IPR013852">
    <property type="entry name" value="Transl_elong_P/YeiP_CS"/>
</dbReference>
<dbReference type="InterPro" id="IPR011768">
    <property type="entry name" value="Transl_elongation_fac_P"/>
</dbReference>
<dbReference type="InterPro" id="IPR008991">
    <property type="entry name" value="Translation_prot_SH3-like_sf"/>
</dbReference>
<dbReference type="NCBIfam" id="TIGR00038">
    <property type="entry name" value="efp"/>
    <property type="match status" value="1"/>
</dbReference>
<dbReference type="NCBIfam" id="NF001810">
    <property type="entry name" value="PRK00529.1"/>
    <property type="match status" value="1"/>
</dbReference>
<dbReference type="PANTHER" id="PTHR30053">
    <property type="entry name" value="ELONGATION FACTOR P"/>
    <property type="match status" value="1"/>
</dbReference>
<dbReference type="PANTHER" id="PTHR30053:SF12">
    <property type="entry name" value="ELONGATION FACTOR P (EF-P) FAMILY PROTEIN"/>
    <property type="match status" value="1"/>
</dbReference>
<dbReference type="Pfam" id="PF01132">
    <property type="entry name" value="EFP"/>
    <property type="match status" value="1"/>
</dbReference>
<dbReference type="Pfam" id="PF08207">
    <property type="entry name" value="EFP_N"/>
    <property type="match status" value="1"/>
</dbReference>
<dbReference type="Pfam" id="PF09285">
    <property type="entry name" value="Elong-fact-P_C"/>
    <property type="match status" value="1"/>
</dbReference>
<dbReference type="PIRSF" id="PIRSF005901">
    <property type="entry name" value="EF-P"/>
    <property type="match status" value="1"/>
</dbReference>
<dbReference type="SMART" id="SM01185">
    <property type="entry name" value="EFP"/>
    <property type="match status" value="1"/>
</dbReference>
<dbReference type="SMART" id="SM00841">
    <property type="entry name" value="Elong-fact-P_C"/>
    <property type="match status" value="1"/>
</dbReference>
<dbReference type="SUPFAM" id="SSF50249">
    <property type="entry name" value="Nucleic acid-binding proteins"/>
    <property type="match status" value="2"/>
</dbReference>
<dbReference type="SUPFAM" id="SSF50104">
    <property type="entry name" value="Translation proteins SH3-like domain"/>
    <property type="match status" value="1"/>
</dbReference>
<dbReference type="PROSITE" id="PS01275">
    <property type="entry name" value="EFP"/>
    <property type="match status" value="1"/>
</dbReference>
<organism>
    <name type="scientific">Desulfatibacillum aliphaticivorans</name>
    <dbReference type="NCBI Taxonomy" id="218208"/>
    <lineage>
        <taxon>Bacteria</taxon>
        <taxon>Pseudomonadati</taxon>
        <taxon>Thermodesulfobacteriota</taxon>
        <taxon>Desulfobacteria</taxon>
        <taxon>Desulfobacterales</taxon>
        <taxon>Desulfatibacillaceae</taxon>
        <taxon>Desulfatibacillum</taxon>
    </lineage>
</organism>
<keyword id="KW-0963">Cytoplasm</keyword>
<keyword id="KW-0251">Elongation factor</keyword>
<keyword id="KW-0648">Protein biosynthesis</keyword>
<keyword id="KW-1185">Reference proteome</keyword>
<accession>B8FLV5</accession>
<evidence type="ECO:0000255" key="1">
    <source>
        <dbReference type="HAMAP-Rule" id="MF_00141"/>
    </source>
</evidence>
<comment type="function">
    <text evidence="1">Involved in peptide bond synthesis. Stimulates efficient translation and peptide-bond synthesis on native or reconstituted 70S ribosomes in vitro. Probably functions indirectly by altering the affinity of the ribosome for aminoacyl-tRNA, thus increasing their reactivity as acceptors for peptidyl transferase.</text>
</comment>
<comment type="pathway">
    <text evidence="1">Protein biosynthesis; polypeptide chain elongation.</text>
</comment>
<comment type="subcellular location">
    <subcellularLocation>
        <location evidence="1">Cytoplasm</location>
    </subcellularLocation>
</comment>
<comment type="similarity">
    <text evidence="1">Belongs to the elongation factor P family.</text>
</comment>
<feature type="chain" id="PRO_1000117892" description="Elongation factor P">
    <location>
        <begin position="1"/>
        <end position="187"/>
    </location>
</feature>
<proteinExistence type="inferred from homology"/>
<reference key="1">
    <citation type="journal article" date="2012" name="Environ. Microbiol.">
        <title>The genome sequence of Desulfatibacillum alkenivorans AK-01: a blueprint for anaerobic alkane oxidation.</title>
        <authorList>
            <person name="Callaghan A.V."/>
            <person name="Morris B.E."/>
            <person name="Pereira I.A."/>
            <person name="McInerney M.J."/>
            <person name="Austin R.N."/>
            <person name="Groves J.T."/>
            <person name="Kukor J.J."/>
            <person name="Suflita J.M."/>
            <person name="Young L.Y."/>
            <person name="Zylstra G.J."/>
            <person name="Wawrik B."/>
        </authorList>
    </citation>
    <scope>NUCLEOTIDE SEQUENCE [LARGE SCALE GENOMIC DNA]</scope>
    <source>
        <strain>AK-01</strain>
    </source>
</reference>